<keyword id="KW-0167">Capsid protein</keyword>
<keyword id="KW-1176">Cytoplasmic inwards viral transport</keyword>
<keyword id="KW-1015">Disulfide bond</keyword>
<keyword id="KW-0238">DNA-binding</keyword>
<keyword id="KW-1039">Host endosome</keyword>
<keyword id="KW-1040">Host Golgi apparatus</keyword>
<keyword id="KW-1048">Host nucleus</keyword>
<keyword id="KW-0945">Host-virus interaction</keyword>
<keyword id="KW-0426">Late protein</keyword>
<keyword id="KW-1177">Microtubular inwards viral transport</keyword>
<keyword id="KW-0597">Phosphoprotein</keyword>
<keyword id="KW-1185">Reference proteome</keyword>
<keyword id="KW-1163">Viral penetration into host nucleus</keyword>
<keyword id="KW-0946">Virion</keyword>
<keyword id="KW-1160">Virus entry into host cell</keyword>
<protein>
    <recommendedName>
        <fullName evidence="1">Minor capsid protein L2</fullName>
    </recommendedName>
</protein>
<accession>P03109</accession>
<organism>
    <name type="scientific">Bovine papillomavirus type 1</name>
    <dbReference type="NCBI Taxonomy" id="337052"/>
    <lineage>
        <taxon>Viruses</taxon>
        <taxon>Monodnaviria</taxon>
        <taxon>Shotokuvirae</taxon>
        <taxon>Cossaviricota</taxon>
        <taxon>Papovaviricetes</taxon>
        <taxon>Zurhausenvirales</taxon>
        <taxon>Papillomaviridae</taxon>
        <taxon>Firstpapillomavirinae</taxon>
        <taxon>Deltapapillomavirus</taxon>
    </lineage>
</organism>
<feature type="chain" id="PRO_0000133560" description="Minor capsid protein L2">
    <location>
        <begin position="1"/>
        <end position="469"/>
    </location>
</feature>
<feature type="region of interest" description="Disordered" evidence="2">
    <location>
        <begin position="401"/>
        <end position="429"/>
    </location>
</feature>
<feature type="short sequence motif" description="Nuclear localization signal" evidence="1">
    <location>
        <begin position="1"/>
        <end position="10"/>
    </location>
</feature>
<feature type="short sequence motif" description="Nuclear localization signal" evidence="1">
    <location>
        <begin position="461"/>
        <end position="468"/>
    </location>
</feature>
<feature type="compositionally biased region" description="Low complexity" evidence="2">
    <location>
        <begin position="414"/>
        <end position="429"/>
    </location>
</feature>
<feature type="disulfide bond" evidence="1">
    <location>
        <begin position="19"/>
        <end position="25"/>
    </location>
</feature>
<gene>
    <name evidence="1" type="primary">L2</name>
</gene>
<comment type="function">
    <text evidence="1">Minor protein of the capsid that localizes along the inner surface of the virion, within the central cavities beneath the L1 pentamers. Plays a role in capsid stabilization through interaction with the major capsid protein L1. Once the virion enters the host cell, L2 escorts the genomic DNA into the nucleus by promoting escape from the endosomal compartments and traffic through the host Golgi network. Mechanistically, the C-terminus of L2 possesses a cell-penetrating peptide that protudes from the host endosome, interacts with host cytoplasmic retromer cargo and thereby mediates the capsid delivery to the host trans-Golgi network. Plays a role through its interaction with host dynein in the intracellular microtubule-dependent transport of viral capsid toward the nucleus. Mediates the viral genome import into the nucleus through binding to host importins. Once within the nucleus, L2 localizes viral genomes to host PML bodies in order to activate early gene expression for establishment of infection. Later on, promotes late gene expression by interacting with the viral E2 protein and by inhibiting its transcriptional activation functions. During virion assembly, encapsidates the genome by direct interaction with the viral DNA.</text>
</comment>
<comment type="subunit">
    <text evidence="1">Interacts with major capsid protein L1. Interacts with E2; this interaction inhibits E2 transcriptional activity but not the DNA replication function E2. Interacts with host GADD45GIP1. Interacts with host HSPA8; this interaction is required for L2 nuclear translocation. Interacts with host importins KPNB2 and KPNB3. Forms a complex with importin alpha2-beta1 heterodimers via interaction with the importin alpha2 adapter. Interacts with host DYNLT1; this interaction is essential for virus intracellular transport during entry. Interacts (via C-terminus) with host retromer subunits VPS35 and VPS29.</text>
</comment>
<comment type="subcellular location">
    <subcellularLocation>
        <location evidence="1">Virion</location>
    </subcellularLocation>
    <subcellularLocation>
        <location evidence="1">Host nucleus</location>
    </subcellularLocation>
    <subcellularLocation>
        <location evidence="1">Host early endosome</location>
    </subcellularLocation>
    <subcellularLocation>
        <location evidence="1">Host Golgi apparatus</location>
    </subcellularLocation>
</comment>
<comment type="PTM">
    <text evidence="1">Highly phosphorylated.</text>
</comment>
<comment type="similarity">
    <text evidence="1">Belongs to the papillomaviridae L2 protein family.</text>
</comment>
<reference key="1">
    <citation type="journal article" date="1982" name="Nature">
        <title>The primary structure and genetic organization of the bovine papillomavirus type 1 genome.</title>
        <authorList>
            <person name="Chen E.Y."/>
            <person name="Howley P.M."/>
            <person name="Levinson A.D."/>
            <person name="Seeburg P.H."/>
        </authorList>
    </citation>
    <scope>NUCLEOTIDE SEQUENCE [GENOMIC DNA]</scope>
</reference>
<name>VL2_BPV1</name>
<organismHost>
    <name type="scientific">Bos taurus</name>
    <name type="common">Bovine</name>
    <dbReference type="NCBI Taxonomy" id="9913"/>
</organismHost>
<evidence type="ECO:0000255" key="1">
    <source>
        <dbReference type="HAMAP-Rule" id="MF_04003"/>
    </source>
</evidence>
<evidence type="ECO:0000256" key="2">
    <source>
        <dbReference type="SAM" id="MobiDB-lite"/>
    </source>
</evidence>
<proteinExistence type="inferred from homology"/>
<sequence>MSARKRVKRASAYDLYRTCKQAGTCPPDVIPKVEGDTIADKILKFGGLAIYLGGLGIGTWSTGRVAAGGSPRYTPLRTAGSTSSLASIGSRAVTAGTRPSIGAGIPLDTLETLGALRPGVYEDTVLPEAPAIVTPDAVPADSGLDALSIGTDSSTETLITLLEPEGPEDIAVLELQPLDRPTWQVSNAVHQSSAYHAPLQLQSSIAETSGLENIFVGGSGLGDTGGENIELTYFGSPRTSTPRSIASKSRGILNWFSKRYYTQVPTEDPEVFSSQTFANPLYEAEPAVLKGPSGRVGLSQVYKPDTLTTRSGTEVGPQLHVRYSLSTIHEDVEAIPYTVDENTQGLAFVPLHEEQAGFEEIELDDFSETHRLLPQNTSSTPVGSGVRRSLIPTQEFSATRPTGVVTYGSPDTYSASPVTDPDSTSPSLVIDDTTTTPIIIIDGHTVDLYSSNYTLHPSLLRKRKKRKHA</sequence>
<dbReference type="EMBL" id="X02346">
    <property type="protein sequence ID" value="CAB57284.1"/>
    <property type="molecule type" value="Genomic_DNA"/>
</dbReference>
<dbReference type="PIR" id="A03653">
    <property type="entry name" value="P2WLB"/>
</dbReference>
<dbReference type="RefSeq" id="NP_056743.1">
    <property type="nucleotide sequence ID" value="NC_001522.1"/>
</dbReference>
<dbReference type="GeneID" id="1489023"/>
<dbReference type="KEGG" id="vg:1489023"/>
<dbReference type="OrthoDB" id="8047at10239"/>
<dbReference type="Proteomes" id="UP000006567">
    <property type="component" value="Genome"/>
</dbReference>
<dbReference type="GO" id="GO:0043657">
    <property type="term" value="C:host cell"/>
    <property type="evidence" value="ECO:0007669"/>
    <property type="project" value="GOC"/>
</dbReference>
<dbReference type="GO" id="GO:0044167">
    <property type="term" value="C:host cell endoplasmic reticulum membrane"/>
    <property type="evidence" value="ECO:0000314"/>
    <property type="project" value="AgBase"/>
</dbReference>
<dbReference type="GO" id="GO:0044177">
    <property type="term" value="C:host cell Golgi apparatus"/>
    <property type="evidence" value="ECO:0007669"/>
    <property type="project" value="UniProtKB-SubCell"/>
</dbReference>
<dbReference type="GO" id="GO:0044185">
    <property type="term" value="C:host cell late endosome membrane"/>
    <property type="evidence" value="ECO:0000314"/>
    <property type="project" value="AgBase"/>
</dbReference>
<dbReference type="GO" id="GO:0042025">
    <property type="term" value="C:host cell nucleus"/>
    <property type="evidence" value="ECO:0007669"/>
    <property type="project" value="UniProtKB-SubCell"/>
</dbReference>
<dbReference type="GO" id="GO:0019028">
    <property type="term" value="C:viral capsid"/>
    <property type="evidence" value="ECO:0000314"/>
    <property type="project" value="AgBase"/>
</dbReference>
<dbReference type="GO" id="GO:0003677">
    <property type="term" value="F:DNA binding"/>
    <property type="evidence" value="ECO:0007669"/>
    <property type="project" value="UniProtKB-UniRule"/>
</dbReference>
<dbReference type="GO" id="GO:0000149">
    <property type="term" value="F:SNARE binding"/>
    <property type="evidence" value="ECO:0000353"/>
    <property type="project" value="AgBase"/>
</dbReference>
<dbReference type="GO" id="GO:0005198">
    <property type="term" value="F:structural molecule activity"/>
    <property type="evidence" value="ECO:0007669"/>
    <property type="project" value="UniProtKB-UniRule"/>
</dbReference>
<dbReference type="GO" id="GO:0075509">
    <property type="term" value="P:endocytosis involved in viral entry into host cell"/>
    <property type="evidence" value="ECO:0000304"/>
    <property type="project" value="AgBase"/>
</dbReference>
<dbReference type="GO" id="GO:0075521">
    <property type="term" value="P:microtubule-dependent intracellular transport of viral material towards nucleus"/>
    <property type="evidence" value="ECO:0007669"/>
    <property type="project" value="UniProtKB-UniRule"/>
</dbReference>
<dbReference type="GO" id="GO:0019073">
    <property type="term" value="P:viral DNA genome packaging"/>
    <property type="evidence" value="ECO:0000304"/>
    <property type="project" value="AgBase"/>
</dbReference>
<dbReference type="GO" id="GO:0075732">
    <property type="term" value="P:viral penetration into host nucleus"/>
    <property type="evidence" value="ECO:0007669"/>
    <property type="project" value="UniProtKB-KW"/>
</dbReference>
<dbReference type="HAMAP" id="MF_04003">
    <property type="entry name" value="PPV_L2"/>
    <property type="match status" value="1"/>
</dbReference>
<dbReference type="InterPro" id="IPR000784">
    <property type="entry name" value="Late_L2"/>
</dbReference>
<dbReference type="Pfam" id="PF00513">
    <property type="entry name" value="Late_protein_L2"/>
    <property type="match status" value="2"/>
</dbReference>